<sequence>MKAYELSIEEAAAKLRAGDISSVELTQSCLQRIGDVEDRVKGFITVDEEGALAQAKAADKALQNGETNPLCGIPMSIKDLLAVKDLPMTCGSKMLEKFIAPYNATIVDKLQGAGAVNLGKVTMDEFAMGSTSETCAFGVPQNPWKEGYVAGGSSGGSAVTVAAQECFFSIGTDTGGSIRQPAALCGVVGMKPTYGRVSRYGLTAFASSLDQAGPLCRTVADTALVMNSICGYDPMDSTSINQEVPDYTASLVEGVKGLRIGIPKEYFAKGLDSEVEKVVRNAIAVLASAGAEIVDVSLPHTEYCVAVYYLIAPAEASTNLSRYDGALYGYRDLESKTLEDMYKDTRSAGFGDEVKKRILIGTYALSSGYYDAYYKKASQVRTLIIEDFKNAYRSCDVLLSPVTPTPAWKLGAKSDDPLAIYLSDIMTVSANLAGIPGMSVPGGFTEDGLPVGIQLQGSHFQEEILLKVAYNLEKLLAIQPGKLDF</sequence>
<keyword id="KW-0067">ATP-binding</keyword>
<keyword id="KW-0436">Ligase</keyword>
<keyword id="KW-0547">Nucleotide-binding</keyword>
<keyword id="KW-0648">Protein biosynthesis</keyword>
<keyword id="KW-1185">Reference proteome</keyword>
<gene>
    <name evidence="1" type="primary">gatA</name>
    <name type="ordered locus">DP0643</name>
</gene>
<name>GATA_DESPS</name>
<organism>
    <name type="scientific">Desulfotalea psychrophila (strain LSv54 / DSM 12343)</name>
    <dbReference type="NCBI Taxonomy" id="177439"/>
    <lineage>
        <taxon>Bacteria</taxon>
        <taxon>Pseudomonadati</taxon>
        <taxon>Thermodesulfobacteriota</taxon>
        <taxon>Desulfobulbia</taxon>
        <taxon>Desulfobulbales</taxon>
        <taxon>Desulfocapsaceae</taxon>
        <taxon>Desulfotalea</taxon>
    </lineage>
</organism>
<comment type="function">
    <text evidence="1">Allows the formation of correctly charged Gln-tRNA(Gln) through the transamidation of misacylated Glu-tRNA(Gln) in organisms which lack glutaminyl-tRNA synthetase. The reaction takes place in the presence of glutamine and ATP through an activated gamma-phospho-Glu-tRNA(Gln).</text>
</comment>
<comment type="catalytic activity">
    <reaction evidence="1">
        <text>L-glutamyl-tRNA(Gln) + L-glutamine + ATP + H2O = L-glutaminyl-tRNA(Gln) + L-glutamate + ADP + phosphate + H(+)</text>
        <dbReference type="Rhea" id="RHEA:17521"/>
        <dbReference type="Rhea" id="RHEA-COMP:9681"/>
        <dbReference type="Rhea" id="RHEA-COMP:9684"/>
        <dbReference type="ChEBI" id="CHEBI:15377"/>
        <dbReference type="ChEBI" id="CHEBI:15378"/>
        <dbReference type="ChEBI" id="CHEBI:29985"/>
        <dbReference type="ChEBI" id="CHEBI:30616"/>
        <dbReference type="ChEBI" id="CHEBI:43474"/>
        <dbReference type="ChEBI" id="CHEBI:58359"/>
        <dbReference type="ChEBI" id="CHEBI:78520"/>
        <dbReference type="ChEBI" id="CHEBI:78521"/>
        <dbReference type="ChEBI" id="CHEBI:456216"/>
        <dbReference type="EC" id="6.3.5.7"/>
    </reaction>
</comment>
<comment type="subunit">
    <text evidence="1">Heterotrimer of A, B and C subunits.</text>
</comment>
<comment type="similarity">
    <text evidence="1">Belongs to the amidase family. GatA subfamily.</text>
</comment>
<accession>Q6AQK1</accession>
<proteinExistence type="inferred from homology"/>
<feature type="chain" id="PRO_0000241096" description="Glutamyl-tRNA(Gln) amidotransferase subunit A">
    <location>
        <begin position="1"/>
        <end position="485"/>
    </location>
</feature>
<feature type="active site" description="Charge relay system" evidence="1">
    <location>
        <position position="78"/>
    </location>
</feature>
<feature type="active site" description="Charge relay system" evidence="1">
    <location>
        <position position="153"/>
    </location>
</feature>
<feature type="active site" description="Acyl-ester intermediate" evidence="1">
    <location>
        <position position="177"/>
    </location>
</feature>
<dbReference type="EC" id="6.3.5.7" evidence="1"/>
<dbReference type="EMBL" id="CR522870">
    <property type="protein sequence ID" value="CAG35372.1"/>
    <property type="molecule type" value="Genomic_DNA"/>
</dbReference>
<dbReference type="RefSeq" id="WP_011187888.1">
    <property type="nucleotide sequence ID" value="NC_006138.1"/>
</dbReference>
<dbReference type="SMR" id="Q6AQK1"/>
<dbReference type="STRING" id="177439.DP0643"/>
<dbReference type="KEGG" id="dps:DP0643"/>
<dbReference type="eggNOG" id="COG0154">
    <property type="taxonomic scope" value="Bacteria"/>
</dbReference>
<dbReference type="HOGENOM" id="CLU_009600_0_3_7"/>
<dbReference type="OrthoDB" id="9811471at2"/>
<dbReference type="Proteomes" id="UP000000602">
    <property type="component" value="Chromosome"/>
</dbReference>
<dbReference type="GO" id="GO:0030956">
    <property type="term" value="C:glutamyl-tRNA(Gln) amidotransferase complex"/>
    <property type="evidence" value="ECO:0007669"/>
    <property type="project" value="InterPro"/>
</dbReference>
<dbReference type="GO" id="GO:0005524">
    <property type="term" value="F:ATP binding"/>
    <property type="evidence" value="ECO:0007669"/>
    <property type="project" value="UniProtKB-KW"/>
</dbReference>
<dbReference type="GO" id="GO:0050567">
    <property type="term" value="F:glutaminyl-tRNA synthase (glutamine-hydrolyzing) activity"/>
    <property type="evidence" value="ECO:0007669"/>
    <property type="project" value="UniProtKB-UniRule"/>
</dbReference>
<dbReference type="GO" id="GO:0006412">
    <property type="term" value="P:translation"/>
    <property type="evidence" value="ECO:0007669"/>
    <property type="project" value="UniProtKB-UniRule"/>
</dbReference>
<dbReference type="Gene3D" id="3.90.1300.10">
    <property type="entry name" value="Amidase signature (AS) domain"/>
    <property type="match status" value="1"/>
</dbReference>
<dbReference type="HAMAP" id="MF_00120">
    <property type="entry name" value="GatA"/>
    <property type="match status" value="1"/>
</dbReference>
<dbReference type="InterPro" id="IPR000120">
    <property type="entry name" value="Amidase"/>
</dbReference>
<dbReference type="InterPro" id="IPR020556">
    <property type="entry name" value="Amidase_CS"/>
</dbReference>
<dbReference type="InterPro" id="IPR023631">
    <property type="entry name" value="Amidase_dom"/>
</dbReference>
<dbReference type="InterPro" id="IPR036928">
    <property type="entry name" value="AS_sf"/>
</dbReference>
<dbReference type="InterPro" id="IPR004412">
    <property type="entry name" value="GatA"/>
</dbReference>
<dbReference type="NCBIfam" id="TIGR00132">
    <property type="entry name" value="gatA"/>
    <property type="match status" value="1"/>
</dbReference>
<dbReference type="PANTHER" id="PTHR11895:SF151">
    <property type="entry name" value="GLUTAMYL-TRNA(GLN) AMIDOTRANSFERASE SUBUNIT A"/>
    <property type="match status" value="1"/>
</dbReference>
<dbReference type="PANTHER" id="PTHR11895">
    <property type="entry name" value="TRANSAMIDASE"/>
    <property type="match status" value="1"/>
</dbReference>
<dbReference type="Pfam" id="PF01425">
    <property type="entry name" value="Amidase"/>
    <property type="match status" value="1"/>
</dbReference>
<dbReference type="SUPFAM" id="SSF75304">
    <property type="entry name" value="Amidase signature (AS) enzymes"/>
    <property type="match status" value="1"/>
</dbReference>
<dbReference type="PROSITE" id="PS00571">
    <property type="entry name" value="AMIDASES"/>
    <property type="match status" value="1"/>
</dbReference>
<protein>
    <recommendedName>
        <fullName evidence="1">Glutamyl-tRNA(Gln) amidotransferase subunit A</fullName>
        <shortName evidence="1">Glu-ADT subunit A</shortName>
        <ecNumber evidence="1">6.3.5.7</ecNumber>
    </recommendedName>
</protein>
<reference key="1">
    <citation type="journal article" date="2004" name="Environ. Microbiol.">
        <title>The genome of Desulfotalea psychrophila, a sulfate-reducing bacterium from permanently cold Arctic sediments.</title>
        <authorList>
            <person name="Rabus R."/>
            <person name="Ruepp A."/>
            <person name="Frickey T."/>
            <person name="Rattei T."/>
            <person name="Fartmann B."/>
            <person name="Stark M."/>
            <person name="Bauer M."/>
            <person name="Zibat A."/>
            <person name="Lombardot T."/>
            <person name="Becker I."/>
            <person name="Amann J."/>
            <person name="Gellner K."/>
            <person name="Teeling H."/>
            <person name="Leuschner W.D."/>
            <person name="Gloeckner F.-O."/>
            <person name="Lupas A.N."/>
            <person name="Amann R."/>
            <person name="Klenk H.-P."/>
        </authorList>
    </citation>
    <scope>NUCLEOTIDE SEQUENCE [LARGE SCALE GENOMIC DNA]</scope>
    <source>
        <strain>DSM 12343 / LSv54</strain>
    </source>
</reference>
<evidence type="ECO:0000255" key="1">
    <source>
        <dbReference type="HAMAP-Rule" id="MF_00120"/>
    </source>
</evidence>